<organism>
    <name type="scientific">Staphylococcus aureus (strain MW2)</name>
    <dbReference type="NCBI Taxonomy" id="196620"/>
    <lineage>
        <taxon>Bacteria</taxon>
        <taxon>Bacillati</taxon>
        <taxon>Bacillota</taxon>
        <taxon>Bacilli</taxon>
        <taxon>Bacillales</taxon>
        <taxon>Staphylococcaceae</taxon>
        <taxon>Staphylococcus</taxon>
    </lineage>
</organism>
<dbReference type="EC" id="3.1.-.-" evidence="1"/>
<dbReference type="EC" id="3.6.4.-" evidence="1"/>
<dbReference type="EMBL" id="BA000033">
    <property type="protein sequence ID" value="BAB94892.1"/>
    <property type="molecule type" value="Genomic_DNA"/>
</dbReference>
<dbReference type="RefSeq" id="WP_001249273.1">
    <property type="nucleotide sequence ID" value="NC_003923.1"/>
</dbReference>
<dbReference type="SMR" id="Q8NX56"/>
<dbReference type="KEGG" id="sam:MW1027"/>
<dbReference type="HOGENOM" id="CLU_011252_2_1_9"/>
<dbReference type="GO" id="GO:0005524">
    <property type="term" value="F:ATP binding"/>
    <property type="evidence" value="ECO:0007669"/>
    <property type="project" value="UniProtKB-UniRule"/>
</dbReference>
<dbReference type="GO" id="GO:0016887">
    <property type="term" value="F:ATP hydrolysis activity"/>
    <property type="evidence" value="ECO:0007669"/>
    <property type="project" value="InterPro"/>
</dbReference>
<dbReference type="GO" id="GO:0140664">
    <property type="term" value="F:ATP-dependent DNA damage sensor activity"/>
    <property type="evidence" value="ECO:0007669"/>
    <property type="project" value="InterPro"/>
</dbReference>
<dbReference type="GO" id="GO:0004519">
    <property type="term" value="F:endonuclease activity"/>
    <property type="evidence" value="ECO:0007669"/>
    <property type="project" value="UniProtKB-UniRule"/>
</dbReference>
<dbReference type="GO" id="GO:0030983">
    <property type="term" value="F:mismatched DNA binding"/>
    <property type="evidence" value="ECO:0007669"/>
    <property type="project" value="InterPro"/>
</dbReference>
<dbReference type="GO" id="GO:0043023">
    <property type="term" value="F:ribosomal large subunit binding"/>
    <property type="evidence" value="ECO:0007669"/>
    <property type="project" value="UniProtKB-UniRule"/>
</dbReference>
<dbReference type="GO" id="GO:0019843">
    <property type="term" value="F:rRNA binding"/>
    <property type="evidence" value="ECO:0007669"/>
    <property type="project" value="UniProtKB-UniRule"/>
</dbReference>
<dbReference type="GO" id="GO:0006298">
    <property type="term" value="P:mismatch repair"/>
    <property type="evidence" value="ECO:0007669"/>
    <property type="project" value="InterPro"/>
</dbReference>
<dbReference type="GO" id="GO:0045910">
    <property type="term" value="P:negative regulation of DNA recombination"/>
    <property type="evidence" value="ECO:0007669"/>
    <property type="project" value="InterPro"/>
</dbReference>
<dbReference type="GO" id="GO:0072344">
    <property type="term" value="P:rescue of stalled ribosome"/>
    <property type="evidence" value="ECO:0007669"/>
    <property type="project" value="UniProtKB-UniRule"/>
</dbReference>
<dbReference type="CDD" id="cd03280">
    <property type="entry name" value="ABC_MutS2"/>
    <property type="match status" value="1"/>
</dbReference>
<dbReference type="FunFam" id="3.30.1370.110:FF:000006">
    <property type="entry name" value="Endonuclease MutS2"/>
    <property type="match status" value="1"/>
</dbReference>
<dbReference type="FunFam" id="3.40.50.300:FF:000830">
    <property type="entry name" value="Endonuclease MutS2"/>
    <property type="match status" value="1"/>
</dbReference>
<dbReference type="Gene3D" id="3.30.1370.110">
    <property type="match status" value="1"/>
</dbReference>
<dbReference type="Gene3D" id="3.40.50.300">
    <property type="entry name" value="P-loop containing nucleotide triphosphate hydrolases"/>
    <property type="match status" value="1"/>
</dbReference>
<dbReference type="HAMAP" id="MF_00092">
    <property type="entry name" value="MutS2"/>
    <property type="match status" value="1"/>
</dbReference>
<dbReference type="InterPro" id="IPR000432">
    <property type="entry name" value="DNA_mismatch_repair_MutS_C"/>
</dbReference>
<dbReference type="InterPro" id="IPR007696">
    <property type="entry name" value="DNA_mismatch_repair_MutS_core"/>
</dbReference>
<dbReference type="InterPro" id="IPR036187">
    <property type="entry name" value="DNA_mismatch_repair_MutS_sf"/>
</dbReference>
<dbReference type="InterPro" id="IPR046893">
    <property type="entry name" value="MSSS"/>
</dbReference>
<dbReference type="InterPro" id="IPR045076">
    <property type="entry name" value="MutS"/>
</dbReference>
<dbReference type="InterPro" id="IPR005747">
    <property type="entry name" value="MutS2"/>
</dbReference>
<dbReference type="InterPro" id="IPR027417">
    <property type="entry name" value="P-loop_NTPase"/>
</dbReference>
<dbReference type="InterPro" id="IPR002625">
    <property type="entry name" value="Smr_dom"/>
</dbReference>
<dbReference type="InterPro" id="IPR036063">
    <property type="entry name" value="Smr_dom_sf"/>
</dbReference>
<dbReference type="NCBIfam" id="TIGR01069">
    <property type="entry name" value="mutS2"/>
    <property type="match status" value="1"/>
</dbReference>
<dbReference type="PANTHER" id="PTHR48466:SF2">
    <property type="entry name" value="OS10G0509000 PROTEIN"/>
    <property type="match status" value="1"/>
</dbReference>
<dbReference type="PANTHER" id="PTHR48466">
    <property type="entry name" value="OS10G0509000 PROTEIN-RELATED"/>
    <property type="match status" value="1"/>
</dbReference>
<dbReference type="Pfam" id="PF20297">
    <property type="entry name" value="MSSS"/>
    <property type="match status" value="1"/>
</dbReference>
<dbReference type="Pfam" id="PF00488">
    <property type="entry name" value="MutS_V"/>
    <property type="match status" value="1"/>
</dbReference>
<dbReference type="Pfam" id="PF01713">
    <property type="entry name" value="Smr"/>
    <property type="match status" value="1"/>
</dbReference>
<dbReference type="PIRSF" id="PIRSF005814">
    <property type="entry name" value="MutS_YshD"/>
    <property type="match status" value="1"/>
</dbReference>
<dbReference type="SMART" id="SM00534">
    <property type="entry name" value="MUTSac"/>
    <property type="match status" value="1"/>
</dbReference>
<dbReference type="SMART" id="SM00533">
    <property type="entry name" value="MUTSd"/>
    <property type="match status" value="1"/>
</dbReference>
<dbReference type="SMART" id="SM00463">
    <property type="entry name" value="SMR"/>
    <property type="match status" value="1"/>
</dbReference>
<dbReference type="SUPFAM" id="SSF48334">
    <property type="entry name" value="DNA repair protein MutS, domain III"/>
    <property type="match status" value="1"/>
</dbReference>
<dbReference type="SUPFAM" id="SSF52540">
    <property type="entry name" value="P-loop containing nucleoside triphosphate hydrolases"/>
    <property type="match status" value="1"/>
</dbReference>
<dbReference type="SUPFAM" id="SSF160443">
    <property type="entry name" value="SMR domain-like"/>
    <property type="match status" value="1"/>
</dbReference>
<dbReference type="PROSITE" id="PS00486">
    <property type="entry name" value="DNA_MISMATCH_REPAIR_2"/>
    <property type="match status" value="1"/>
</dbReference>
<dbReference type="PROSITE" id="PS50828">
    <property type="entry name" value="SMR"/>
    <property type="match status" value="1"/>
</dbReference>
<feature type="chain" id="PRO_0000115233" description="Endonuclease MutS2">
    <location>
        <begin position="1"/>
        <end position="782"/>
    </location>
</feature>
<feature type="domain" description="Smr" evidence="1">
    <location>
        <begin position="707"/>
        <end position="782"/>
    </location>
</feature>
<feature type="binding site" evidence="1">
    <location>
        <begin position="336"/>
        <end position="343"/>
    </location>
    <ligand>
        <name>ATP</name>
        <dbReference type="ChEBI" id="CHEBI:30616"/>
    </ligand>
</feature>
<name>MUTS2_STAAW</name>
<sequence length="782" mass="88656">MRQKTLDVLEFEKIKSLVANETISDLGLEKVNQMMPATNFETVVFQMEETDEIAQIYNKHRLPSLSGLSKVSAFIHRADIGGVLNVSELNLIKRLIQVQNQFKTFYNQLVEEDEGVKYPILDDKMNQLPVLTDLFHQINETCDTYDLYDNASYELQGIRSKISSTNQRIRQNLDRIVKSQANQKKLSDAIVTVRNERNVIPVKAEYRQDFNGIVHDQSASGQTLYIEPSSVVEMNNQISRLRHDEAIEKERILTQLTGYVAADKDALLVAEQVMGQLDFLIAKARYSRSVKGTKPIFKEDRTVYLPKAYHPLLNRETVVANTIEFMEDIETVIITGPNTGGKTVTLKTLGLIIVMAQSGLLIPTLDGSQLSVFKNVYCDIGDEQSIEQSLSTFSSHMTNIVEILKHADKHSLVLFDELGAGTDPSEGAALAMSILDHVRKIGSLVMATTHYPELKAYSYNREGVMNASVEFDVDTLSPTYKLLMGVPGRSNAFDISKKLGLSLNIINKAKTMIGTDEKEINEMIESLERNYKRVETQRLELDRLVKEAEQVHDDLSKQYQQFQNYEKSLIEEAKEKANQKIKAATKEADDIIKDLRQLREQKGADVKEHELIDKKKRLDDHYEAKSIKQNVQKQKYDKIVAGDEVKVLSYGQKGEVLEIVNDEEAIVQMGIIKMKLPIEDLEKKQKEKVKPTKMVTRQNRQTIKTELDLRGYRYEDALIELDQYLDQAVLSNYEQVYIIHGKGTGALQKGVQQHLKKHKSVSDFRGGMPSEGGFGVTVATLK</sequence>
<protein>
    <recommendedName>
        <fullName evidence="1">Endonuclease MutS2</fullName>
        <ecNumber evidence="1">3.1.-.-</ecNumber>
    </recommendedName>
    <alternativeName>
        <fullName evidence="1">Ribosome-associated protein quality control-upstream factor</fullName>
        <shortName evidence="1">RQC-upstream factor</shortName>
        <shortName evidence="1">RqcU</shortName>
        <ecNumber evidence="1">3.6.4.-</ecNumber>
    </alternativeName>
</protein>
<accession>Q8NX56</accession>
<gene>
    <name evidence="1" type="primary">mutS2</name>
    <name evidence="1" type="synonym">rqcU</name>
    <name type="ordered locus">MW1027</name>
</gene>
<reference key="1">
    <citation type="journal article" date="2002" name="Lancet">
        <title>Genome and virulence determinants of high virulence community-acquired MRSA.</title>
        <authorList>
            <person name="Baba T."/>
            <person name="Takeuchi F."/>
            <person name="Kuroda M."/>
            <person name="Yuzawa H."/>
            <person name="Aoki K."/>
            <person name="Oguchi A."/>
            <person name="Nagai Y."/>
            <person name="Iwama N."/>
            <person name="Asano K."/>
            <person name="Naimi T."/>
            <person name="Kuroda H."/>
            <person name="Cui L."/>
            <person name="Yamamoto K."/>
            <person name="Hiramatsu K."/>
        </authorList>
    </citation>
    <scope>NUCLEOTIDE SEQUENCE [LARGE SCALE GENOMIC DNA]</scope>
    <source>
        <strain>MW2</strain>
    </source>
</reference>
<keyword id="KW-0067">ATP-binding</keyword>
<keyword id="KW-0238">DNA-binding</keyword>
<keyword id="KW-0255">Endonuclease</keyword>
<keyword id="KW-0378">Hydrolase</keyword>
<keyword id="KW-0540">Nuclease</keyword>
<keyword id="KW-0547">Nucleotide-binding</keyword>
<keyword id="KW-0694">RNA-binding</keyword>
<keyword id="KW-0699">rRNA-binding</keyword>
<proteinExistence type="inferred from homology"/>
<comment type="function">
    <text evidence="1">Endonuclease that is involved in the suppression of homologous recombination and thus may have a key role in the control of bacterial genetic diversity.</text>
</comment>
<comment type="function">
    <text evidence="1">Acts as a ribosome collision sensor, splitting the ribosome into its 2 subunits. Detects stalled/collided 70S ribosomes which it binds and splits by an ATP-hydrolysis driven conformational change. Acts upstream of the ribosome quality control system (RQC), a ribosome-associated complex that mediates the extraction of incompletely synthesized nascent chains from stalled ribosomes and their subsequent degradation. Probably generates substrates for RQC.</text>
</comment>
<comment type="subunit">
    <text evidence="1">Homodimer. Binds to stalled ribosomes, contacting rRNA.</text>
</comment>
<comment type="similarity">
    <text evidence="1">Belongs to the DNA mismatch repair MutS family. MutS2 subfamily.</text>
</comment>
<evidence type="ECO:0000255" key="1">
    <source>
        <dbReference type="HAMAP-Rule" id="MF_00092"/>
    </source>
</evidence>